<keyword id="KW-0963">Cytoplasm</keyword>
<keyword id="KW-0227">DNA damage</keyword>
<keyword id="KW-0233">DNA recombination</keyword>
<keyword id="KW-0234">DNA repair</keyword>
<keyword id="KW-0238">DNA-binding</keyword>
<keyword id="KW-1185">Reference proteome</keyword>
<accession>Q7N548</accession>
<evidence type="ECO:0000255" key="1">
    <source>
        <dbReference type="HAMAP-Rule" id="MF_00031"/>
    </source>
</evidence>
<reference key="1">
    <citation type="journal article" date="2003" name="Nat. Biotechnol.">
        <title>The genome sequence of the entomopathogenic bacterium Photorhabdus luminescens.</title>
        <authorList>
            <person name="Duchaud E."/>
            <person name="Rusniok C."/>
            <person name="Frangeul L."/>
            <person name="Buchrieser C."/>
            <person name="Givaudan A."/>
            <person name="Taourit S."/>
            <person name="Bocs S."/>
            <person name="Boursaux-Eude C."/>
            <person name="Chandler M."/>
            <person name="Charles J.-F."/>
            <person name="Dassa E."/>
            <person name="Derose R."/>
            <person name="Derzelle S."/>
            <person name="Freyssinet G."/>
            <person name="Gaudriault S."/>
            <person name="Medigue C."/>
            <person name="Lanois A."/>
            <person name="Powell K."/>
            <person name="Siguier P."/>
            <person name="Vincent R."/>
            <person name="Wingate V."/>
            <person name="Zouine M."/>
            <person name="Glaser P."/>
            <person name="Boemare N."/>
            <person name="Danchin A."/>
            <person name="Kunst F."/>
        </authorList>
    </citation>
    <scope>NUCLEOTIDE SEQUENCE [LARGE SCALE GENOMIC DNA]</scope>
    <source>
        <strain>DSM 15139 / CIP 105565 / TT01</strain>
    </source>
</reference>
<comment type="function">
    <text evidence="1">The RuvA-RuvB-RuvC complex processes Holliday junction (HJ) DNA during genetic recombination and DNA repair, while the RuvA-RuvB complex plays an important role in the rescue of blocked DNA replication forks via replication fork reversal (RFR). RuvA specifically binds to HJ cruciform DNA, conferring on it an open structure. The RuvB hexamer acts as an ATP-dependent pump, pulling dsDNA into and through the RuvAB complex. HJ branch migration allows RuvC to scan DNA until it finds its consensus sequence, where it cleaves and resolves the cruciform DNA.</text>
</comment>
<comment type="subunit">
    <text evidence="1">Homotetramer. Forms an RuvA(8)-RuvB(12)-Holliday junction (HJ) complex. HJ DNA is sandwiched between 2 RuvA tetramers; dsDNA enters through RuvA and exits via RuvB. An RuvB hexamer assembles on each DNA strand where it exits the tetramer. Each RuvB hexamer is contacted by two RuvA subunits (via domain III) on 2 adjacent RuvB subunits; this complex drives branch migration. In the full resolvosome a probable DNA-RuvA(4)-RuvB(12)-RuvC(2) complex forms which resolves the HJ.</text>
</comment>
<comment type="subcellular location">
    <subcellularLocation>
        <location evidence="1">Cytoplasm</location>
    </subcellularLocation>
</comment>
<comment type="domain">
    <text evidence="1">Has three domains with a flexible linker between the domains II and III and assumes an 'L' shape. Domain III is highly mobile and contacts RuvB.</text>
</comment>
<comment type="similarity">
    <text evidence="1">Belongs to the RuvA family.</text>
</comment>
<name>RUVA_PHOLL</name>
<dbReference type="EMBL" id="BX571866">
    <property type="protein sequence ID" value="CAE14404.1"/>
    <property type="molecule type" value="Genomic_DNA"/>
</dbReference>
<dbReference type="RefSeq" id="WP_011146365.1">
    <property type="nucleotide sequence ID" value="NC_005126.1"/>
</dbReference>
<dbReference type="SMR" id="Q7N548"/>
<dbReference type="STRING" id="243265.plu2111"/>
<dbReference type="GeneID" id="48848390"/>
<dbReference type="KEGG" id="plu:plu2111"/>
<dbReference type="eggNOG" id="COG0632">
    <property type="taxonomic scope" value="Bacteria"/>
</dbReference>
<dbReference type="HOGENOM" id="CLU_087936_0_0_6"/>
<dbReference type="OrthoDB" id="5293449at2"/>
<dbReference type="Proteomes" id="UP000002514">
    <property type="component" value="Chromosome"/>
</dbReference>
<dbReference type="GO" id="GO:0005737">
    <property type="term" value="C:cytoplasm"/>
    <property type="evidence" value="ECO:0007669"/>
    <property type="project" value="UniProtKB-SubCell"/>
</dbReference>
<dbReference type="GO" id="GO:0009379">
    <property type="term" value="C:Holliday junction helicase complex"/>
    <property type="evidence" value="ECO:0007669"/>
    <property type="project" value="InterPro"/>
</dbReference>
<dbReference type="GO" id="GO:0048476">
    <property type="term" value="C:Holliday junction resolvase complex"/>
    <property type="evidence" value="ECO:0007669"/>
    <property type="project" value="UniProtKB-UniRule"/>
</dbReference>
<dbReference type="GO" id="GO:0005524">
    <property type="term" value="F:ATP binding"/>
    <property type="evidence" value="ECO:0007669"/>
    <property type="project" value="InterPro"/>
</dbReference>
<dbReference type="GO" id="GO:0000400">
    <property type="term" value="F:four-way junction DNA binding"/>
    <property type="evidence" value="ECO:0007669"/>
    <property type="project" value="UniProtKB-UniRule"/>
</dbReference>
<dbReference type="GO" id="GO:0009378">
    <property type="term" value="F:four-way junction helicase activity"/>
    <property type="evidence" value="ECO:0007669"/>
    <property type="project" value="InterPro"/>
</dbReference>
<dbReference type="GO" id="GO:0006310">
    <property type="term" value="P:DNA recombination"/>
    <property type="evidence" value="ECO:0007669"/>
    <property type="project" value="UniProtKB-UniRule"/>
</dbReference>
<dbReference type="GO" id="GO:0006281">
    <property type="term" value="P:DNA repair"/>
    <property type="evidence" value="ECO:0007669"/>
    <property type="project" value="UniProtKB-UniRule"/>
</dbReference>
<dbReference type="CDD" id="cd14332">
    <property type="entry name" value="UBA_RuvA_C"/>
    <property type="match status" value="1"/>
</dbReference>
<dbReference type="FunFam" id="1.10.150.20:FF:000012">
    <property type="entry name" value="Holliday junction ATP-dependent DNA helicase RuvA"/>
    <property type="match status" value="1"/>
</dbReference>
<dbReference type="FunFam" id="2.40.50.140:FF:000083">
    <property type="entry name" value="Holliday junction ATP-dependent DNA helicase RuvA"/>
    <property type="match status" value="1"/>
</dbReference>
<dbReference type="Gene3D" id="1.10.150.20">
    <property type="entry name" value="5' to 3' exonuclease, C-terminal subdomain"/>
    <property type="match status" value="1"/>
</dbReference>
<dbReference type="Gene3D" id="1.10.8.10">
    <property type="entry name" value="DNA helicase RuvA subunit, C-terminal domain"/>
    <property type="match status" value="1"/>
</dbReference>
<dbReference type="Gene3D" id="2.40.50.140">
    <property type="entry name" value="Nucleic acid-binding proteins"/>
    <property type="match status" value="1"/>
</dbReference>
<dbReference type="HAMAP" id="MF_00031">
    <property type="entry name" value="DNA_HJ_migration_RuvA"/>
    <property type="match status" value="1"/>
</dbReference>
<dbReference type="InterPro" id="IPR013849">
    <property type="entry name" value="DNA_helicase_Holl-junc_RuvA_I"/>
</dbReference>
<dbReference type="InterPro" id="IPR003583">
    <property type="entry name" value="Hlx-hairpin-Hlx_DNA-bd_motif"/>
</dbReference>
<dbReference type="InterPro" id="IPR012340">
    <property type="entry name" value="NA-bd_OB-fold"/>
</dbReference>
<dbReference type="InterPro" id="IPR000085">
    <property type="entry name" value="RuvA"/>
</dbReference>
<dbReference type="InterPro" id="IPR010994">
    <property type="entry name" value="RuvA_2-like"/>
</dbReference>
<dbReference type="InterPro" id="IPR011114">
    <property type="entry name" value="RuvA_C"/>
</dbReference>
<dbReference type="InterPro" id="IPR036267">
    <property type="entry name" value="RuvA_C_sf"/>
</dbReference>
<dbReference type="NCBIfam" id="TIGR00084">
    <property type="entry name" value="ruvA"/>
    <property type="match status" value="1"/>
</dbReference>
<dbReference type="Pfam" id="PF14520">
    <property type="entry name" value="HHH_5"/>
    <property type="match status" value="1"/>
</dbReference>
<dbReference type="Pfam" id="PF07499">
    <property type="entry name" value="RuvA_C"/>
    <property type="match status" value="1"/>
</dbReference>
<dbReference type="Pfam" id="PF01330">
    <property type="entry name" value="RuvA_N"/>
    <property type="match status" value="1"/>
</dbReference>
<dbReference type="SMART" id="SM00278">
    <property type="entry name" value="HhH1"/>
    <property type="match status" value="2"/>
</dbReference>
<dbReference type="SUPFAM" id="SSF46929">
    <property type="entry name" value="DNA helicase RuvA subunit, C-terminal domain"/>
    <property type="match status" value="1"/>
</dbReference>
<dbReference type="SUPFAM" id="SSF50249">
    <property type="entry name" value="Nucleic acid-binding proteins"/>
    <property type="match status" value="1"/>
</dbReference>
<dbReference type="SUPFAM" id="SSF47781">
    <property type="entry name" value="RuvA domain 2-like"/>
    <property type="match status" value="1"/>
</dbReference>
<organism>
    <name type="scientific">Photorhabdus laumondii subsp. laumondii (strain DSM 15139 / CIP 105565 / TT01)</name>
    <name type="common">Photorhabdus luminescens subsp. laumondii</name>
    <dbReference type="NCBI Taxonomy" id="243265"/>
    <lineage>
        <taxon>Bacteria</taxon>
        <taxon>Pseudomonadati</taxon>
        <taxon>Pseudomonadota</taxon>
        <taxon>Gammaproteobacteria</taxon>
        <taxon>Enterobacterales</taxon>
        <taxon>Morganellaceae</taxon>
        <taxon>Photorhabdus</taxon>
    </lineage>
</organism>
<sequence>MIGRLRGIVLEKQPPLVLLETNGVGYEVHMPMTCFYELPDAGQEAVLFTHFVVREDAQLLYGFNDKQERALFRELIKVNGVGPKLALAILSGMSAQQFVSAIEREAIVSLVKLPGVGKKTAERLVVEMKDRFKGLNGDLFNQSSDINLPATAKQTTSDADSEAEAAAALVSLGYKPQEASRMVSKIAKPGADCETLIREALRAVL</sequence>
<feature type="chain" id="PRO_0000094660" description="Holliday junction branch migration complex subunit RuvA">
    <location>
        <begin position="1"/>
        <end position="205"/>
    </location>
</feature>
<feature type="region of interest" description="Domain I" evidence="1">
    <location>
        <begin position="1"/>
        <end position="64"/>
    </location>
</feature>
<feature type="region of interest" description="Domain II" evidence="1">
    <location>
        <begin position="65"/>
        <end position="143"/>
    </location>
</feature>
<feature type="region of interest" description="Flexible linker" evidence="1">
    <location>
        <begin position="144"/>
        <end position="156"/>
    </location>
</feature>
<feature type="region of interest" description="Domain III" evidence="1">
    <location>
        <begin position="157"/>
        <end position="205"/>
    </location>
</feature>
<proteinExistence type="inferred from homology"/>
<gene>
    <name evidence="1" type="primary">ruvA</name>
    <name type="ordered locus">plu2111</name>
</gene>
<protein>
    <recommendedName>
        <fullName evidence="1">Holliday junction branch migration complex subunit RuvA</fullName>
    </recommendedName>
</protein>